<gene>
    <name evidence="1" type="primary">ruvB</name>
    <name type="ordered locus">Mhun_0892</name>
</gene>
<name>RUVB_METHJ</name>
<organism>
    <name type="scientific">Methanospirillum hungatei JF-1 (strain ATCC 27890 / DSM 864 / NBRC 100397 / JF-1)</name>
    <dbReference type="NCBI Taxonomy" id="323259"/>
    <lineage>
        <taxon>Archaea</taxon>
        <taxon>Methanobacteriati</taxon>
        <taxon>Methanobacteriota</taxon>
        <taxon>Stenosarchaea group</taxon>
        <taxon>Methanomicrobia</taxon>
        <taxon>Methanomicrobiales</taxon>
        <taxon>Methanospirillaceae</taxon>
        <taxon>Methanospirillum</taxon>
    </lineage>
</organism>
<proteinExistence type="inferred from homology"/>
<reference key="1">
    <citation type="journal article" date="2016" name="Stand. Genomic Sci.">
        <title>Complete genome sequence of Methanospirillum hungatei type strain JF1.</title>
        <authorList>
            <person name="Gunsalus R.P."/>
            <person name="Cook L.E."/>
            <person name="Crable B."/>
            <person name="Rohlin L."/>
            <person name="McDonald E."/>
            <person name="Mouttaki H."/>
            <person name="Sieber J.R."/>
            <person name="Poweleit N."/>
            <person name="Zhou H."/>
            <person name="Lapidus A.L."/>
            <person name="Daligault H.E."/>
            <person name="Land M."/>
            <person name="Gilna P."/>
            <person name="Ivanova N."/>
            <person name="Kyrpides N."/>
            <person name="Culley D.E."/>
            <person name="McInerney M.J."/>
        </authorList>
    </citation>
    <scope>NUCLEOTIDE SEQUENCE [LARGE SCALE GENOMIC DNA]</scope>
    <source>
        <strain>ATCC 27890 / DSM 864 / NBRC 100397 / JF-1</strain>
    </source>
</reference>
<feature type="chain" id="PRO_0000235434" description="Holliday junction branch migration complex subunit RuvB">
    <location>
        <begin position="1"/>
        <end position="337"/>
    </location>
</feature>
<feature type="region of interest" description="Large ATPase domain (RuvB-L)" evidence="1">
    <location>
        <begin position="1"/>
        <end position="181"/>
    </location>
</feature>
<feature type="region of interest" description="Disordered" evidence="2">
    <location>
        <begin position="1"/>
        <end position="20"/>
    </location>
</feature>
<feature type="region of interest" description="Small ATPAse domain (RuvB-S)" evidence="1">
    <location>
        <begin position="182"/>
        <end position="252"/>
    </location>
</feature>
<feature type="region of interest" description="Head domain (RuvB-H)" evidence="1">
    <location>
        <begin position="255"/>
        <end position="337"/>
    </location>
</feature>
<feature type="binding site" evidence="1">
    <location>
        <position position="21"/>
    </location>
    <ligand>
        <name>ATP</name>
        <dbReference type="ChEBI" id="CHEBI:30616"/>
    </ligand>
</feature>
<feature type="binding site" evidence="1">
    <location>
        <position position="62"/>
    </location>
    <ligand>
        <name>ATP</name>
        <dbReference type="ChEBI" id="CHEBI:30616"/>
    </ligand>
</feature>
<feature type="binding site" evidence="1">
    <location>
        <position position="65"/>
    </location>
    <ligand>
        <name>ATP</name>
        <dbReference type="ChEBI" id="CHEBI:30616"/>
    </ligand>
</feature>
<feature type="binding site" evidence="1">
    <location>
        <position position="66"/>
    </location>
    <ligand>
        <name>ATP</name>
        <dbReference type="ChEBI" id="CHEBI:30616"/>
    </ligand>
</feature>
<feature type="binding site" evidence="1">
    <location>
        <position position="66"/>
    </location>
    <ligand>
        <name>Mg(2+)</name>
        <dbReference type="ChEBI" id="CHEBI:18420"/>
    </ligand>
</feature>
<feature type="binding site" evidence="1">
    <location>
        <position position="67"/>
    </location>
    <ligand>
        <name>ATP</name>
        <dbReference type="ChEBI" id="CHEBI:30616"/>
    </ligand>
</feature>
<feature type="binding site" evidence="1">
    <location>
        <begin position="128"/>
        <end position="130"/>
    </location>
    <ligand>
        <name>ATP</name>
        <dbReference type="ChEBI" id="CHEBI:30616"/>
    </ligand>
</feature>
<feature type="binding site" evidence="1">
    <location>
        <position position="171"/>
    </location>
    <ligand>
        <name>ATP</name>
        <dbReference type="ChEBI" id="CHEBI:30616"/>
    </ligand>
</feature>
<feature type="binding site" evidence="1">
    <location>
        <position position="181"/>
    </location>
    <ligand>
        <name>ATP</name>
        <dbReference type="ChEBI" id="CHEBI:30616"/>
    </ligand>
</feature>
<feature type="binding site" evidence="1">
    <location>
        <position position="218"/>
    </location>
    <ligand>
        <name>ATP</name>
        <dbReference type="ChEBI" id="CHEBI:30616"/>
    </ligand>
</feature>
<feature type="binding site" evidence="1">
    <location>
        <position position="310"/>
    </location>
    <ligand>
        <name>DNA</name>
        <dbReference type="ChEBI" id="CHEBI:16991"/>
    </ligand>
</feature>
<feature type="binding site" evidence="1">
    <location>
        <position position="315"/>
    </location>
    <ligand>
        <name>DNA</name>
        <dbReference type="ChEBI" id="CHEBI:16991"/>
    </ligand>
</feature>
<evidence type="ECO:0000255" key="1">
    <source>
        <dbReference type="HAMAP-Rule" id="MF_00016"/>
    </source>
</evidence>
<evidence type="ECO:0000256" key="2">
    <source>
        <dbReference type="SAM" id="MobiDB-lite"/>
    </source>
</evidence>
<comment type="function">
    <text evidence="1">The RuvA-RuvB-RuvC complex processes Holliday junction (HJ) DNA during genetic recombination and DNA repair, while the RuvA-RuvB complex plays an important role in the rescue of blocked DNA replication forks via replication fork reversal (RFR). RuvA specifically binds to HJ cruciform DNA, conferring on it an open structure. The RuvB hexamer acts as an ATP-dependent pump, pulling dsDNA into and through the RuvAB complex. RuvB forms 2 homohexamers on either side of HJ DNA bound by 1 or 2 RuvA tetramers; 4 subunits per hexamer contact DNA at a time. Coordinated motions by a converter formed by DNA-disengaged RuvB subunits stimulates ATP hydrolysis and nucleotide exchange. Immobilization of the converter enables RuvB to convert the ATP-contained energy into a lever motion, pulling 2 nucleotides of DNA out of the RuvA tetramer per ATP hydrolyzed, thus driving DNA branch migration. The RuvB motors rotate together with the DNA substrate, which together with the progressing nucleotide cycle form the mechanistic basis for DNA recombination by continuous HJ branch migration. Branch migration allows RuvC to scan DNA until it finds its consensus sequence, where it cleaves and resolves cruciform DNA.</text>
</comment>
<comment type="catalytic activity">
    <reaction evidence="1">
        <text>ATP + H2O = ADP + phosphate + H(+)</text>
        <dbReference type="Rhea" id="RHEA:13065"/>
        <dbReference type="ChEBI" id="CHEBI:15377"/>
        <dbReference type="ChEBI" id="CHEBI:15378"/>
        <dbReference type="ChEBI" id="CHEBI:30616"/>
        <dbReference type="ChEBI" id="CHEBI:43474"/>
        <dbReference type="ChEBI" id="CHEBI:456216"/>
    </reaction>
</comment>
<comment type="subunit">
    <text evidence="1">Homohexamer. Forms an RuvA(8)-RuvB(12)-Holliday junction (HJ) complex. HJ DNA is sandwiched between 2 RuvA tetramers; dsDNA enters through RuvA and exits via RuvB. An RuvB hexamer assembles on each DNA strand where it exits the tetramer. Each RuvB hexamer is contacted by two RuvA subunits (via domain III) on 2 adjacent RuvB subunits; this complex drives branch migration. In the full resolvosome a probable DNA-RuvA(4)-RuvB(12)-RuvC(2) complex forms which resolves the HJ.</text>
</comment>
<comment type="subcellular location">
    <subcellularLocation>
        <location evidence="1">Cytoplasm</location>
    </subcellularLocation>
</comment>
<comment type="domain">
    <text evidence="1">Has 3 domains, the large (RuvB-L) and small ATPase (RuvB-S) domains and the C-terminal head (RuvB-H) domain. The head domain binds DNA, while the ATPase domains jointly bind ATP, ADP or are empty depending on the state of the subunit in the translocation cycle. During a single DNA translocation step the structure of each domain remains the same, but their relative positions change.</text>
</comment>
<comment type="similarity">
    <text evidence="1">Belongs to the RuvB family.</text>
</comment>
<protein>
    <recommendedName>
        <fullName evidence="1">Holliday junction branch migration complex subunit RuvB</fullName>
        <ecNumber evidence="1">3.6.4.-</ecNumber>
    </recommendedName>
</protein>
<sequence length="337" mass="36988">MQTRFVSPVNHDEEQDEPSVRPGLLADFIGQDSIKDALTVAITSARKRNKPLDHILFSGPPGLGKTTLAHIIAQEMNSHIETTSGPVLDRPGDLAALLTPLKDRDFLFIDEIHRLSPVIEEILYPAMEDYTIDLLIGEGPSARTIQLPLERFTLIGATTRLGLLGSPFRDRFGIILRLDLYDPSELTVIVTRSAGILGIPITPEGAAEIAGRSRGTPRIANRLLKRAYDYAIVRGTGSIDQNIANTALFALGVDQKGLDILDRRILEVIANDFDGGPVGLKTISISVGEEPRTIEDVYEPYLIRIGFLKRTPQGRMITSAARDHLGNSHTRDLTSFL</sequence>
<accession>Q2FPZ8</accession>
<keyword id="KW-0067">ATP-binding</keyword>
<keyword id="KW-0963">Cytoplasm</keyword>
<keyword id="KW-0227">DNA damage</keyword>
<keyword id="KW-0233">DNA recombination</keyword>
<keyword id="KW-0234">DNA repair</keyword>
<keyword id="KW-0238">DNA-binding</keyword>
<keyword id="KW-0378">Hydrolase</keyword>
<keyword id="KW-0547">Nucleotide-binding</keyword>
<keyword id="KW-1185">Reference proteome</keyword>
<dbReference type="EC" id="3.6.4.-" evidence="1"/>
<dbReference type="EMBL" id="CP000254">
    <property type="protein sequence ID" value="ABD40642.1"/>
    <property type="molecule type" value="Genomic_DNA"/>
</dbReference>
<dbReference type="RefSeq" id="WP_011447921.1">
    <property type="nucleotide sequence ID" value="NC_007796.1"/>
</dbReference>
<dbReference type="SMR" id="Q2FPZ8"/>
<dbReference type="STRING" id="323259.Mhun_0892"/>
<dbReference type="EnsemblBacteria" id="ABD40642">
    <property type="protein sequence ID" value="ABD40642"/>
    <property type="gene ID" value="Mhun_0892"/>
</dbReference>
<dbReference type="GeneID" id="3923614"/>
<dbReference type="KEGG" id="mhu:Mhun_0892"/>
<dbReference type="eggNOG" id="arCOG00473">
    <property type="taxonomic scope" value="Archaea"/>
</dbReference>
<dbReference type="HOGENOM" id="CLU_055599_1_0_2"/>
<dbReference type="InParanoid" id="Q2FPZ8"/>
<dbReference type="OrthoDB" id="8658at2157"/>
<dbReference type="Proteomes" id="UP000001941">
    <property type="component" value="Chromosome"/>
</dbReference>
<dbReference type="GO" id="GO:0005737">
    <property type="term" value="C:cytoplasm"/>
    <property type="evidence" value="ECO:0007669"/>
    <property type="project" value="UniProtKB-SubCell"/>
</dbReference>
<dbReference type="GO" id="GO:0048476">
    <property type="term" value="C:Holliday junction resolvase complex"/>
    <property type="evidence" value="ECO:0007669"/>
    <property type="project" value="UniProtKB-UniRule"/>
</dbReference>
<dbReference type="GO" id="GO:0005524">
    <property type="term" value="F:ATP binding"/>
    <property type="evidence" value="ECO:0007669"/>
    <property type="project" value="UniProtKB-UniRule"/>
</dbReference>
<dbReference type="GO" id="GO:0016887">
    <property type="term" value="F:ATP hydrolysis activity"/>
    <property type="evidence" value="ECO:0007669"/>
    <property type="project" value="InterPro"/>
</dbReference>
<dbReference type="GO" id="GO:0000400">
    <property type="term" value="F:four-way junction DNA binding"/>
    <property type="evidence" value="ECO:0007669"/>
    <property type="project" value="UniProtKB-UniRule"/>
</dbReference>
<dbReference type="GO" id="GO:0009378">
    <property type="term" value="F:four-way junction helicase activity"/>
    <property type="evidence" value="ECO:0007669"/>
    <property type="project" value="InterPro"/>
</dbReference>
<dbReference type="GO" id="GO:0006310">
    <property type="term" value="P:DNA recombination"/>
    <property type="evidence" value="ECO:0007669"/>
    <property type="project" value="UniProtKB-UniRule"/>
</dbReference>
<dbReference type="GO" id="GO:0006281">
    <property type="term" value="P:DNA repair"/>
    <property type="evidence" value="ECO:0007669"/>
    <property type="project" value="UniProtKB-UniRule"/>
</dbReference>
<dbReference type="CDD" id="cd00009">
    <property type="entry name" value="AAA"/>
    <property type="match status" value="1"/>
</dbReference>
<dbReference type="Gene3D" id="1.10.8.60">
    <property type="match status" value="1"/>
</dbReference>
<dbReference type="Gene3D" id="3.40.50.300">
    <property type="entry name" value="P-loop containing nucleotide triphosphate hydrolases"/>
    <property type="match status" value="1"/>
</dbReference>
<dbReference type="Gene3D" id="1.10.10.10">
    <property type="entry name" value="Winged helix-like DNA-binding domain superfamily/Winged helix DNA-binding domain"/>
    <property type="match status" value="1"/>
</dbReference>
<dbReference type="HAMAP" id="MF_00016">
    <property type="entry name" value="DNA_HJ_migration_RuvB"/>
    <property type="match status" value="1"/>
</dbReference>
<dbReference type="InterPro" id="IPR003593">
    <property type="entry name" value="AAA+_ATPase"/>
</dbReference>
<dbReference type="InterPro" id="IPR041445">
    <property type="entry name" value="AAA_lid_4"/>
</dbReference>
<dbReference type="InterPro" id="IPR004605">
    <property type="entry name" value="DNA_helicase_Holl-junc_RuvB"/>
</dbReference>
<dbReference type="InterPro" id="IPR027417">
    <property type="entry name" value="P-loop_NTPase"/>
</dbReference>
<dbReference type="InterPro" id="IPR008824">
    <property type="entry name" value="RuvB-like_N"/>
</dbReference>
<dbReference type="InterPro" id="IPR008823">
    <property type="entry name" value="RuvB_C"/>
</dbReference>
<dbReference type="InterPro" id="IPR036388">
    <property type="entry name" value="WH-like_DNA-bd_sf"/>
</dbReference>
<dbReference type="InterPro" id="IPR036390">
    <property type="entry name" value="WH_DNA-bd_sf"/>
</dbReference>
<dbReference type="NCBIfam" id="NF000868">
    <property type="entry name" value="PRK00080.1"/>
    <property type="match status" value="1"/>
</dbReference>
<dbReference type="NCBIfam" id="TIGR00635">
    <property type="entry name" value="ruvB"/>
    <property type="match status" value="1"/>
</dbReference>
<dbReference type="PANTHER" id="PTHR42848">
    <property type="match status" value="1"/>
</dbReference>
<dbReference type="PANTHER" id="PTHR42848:SF1">
    <property type="entry name" value="HOLLIDAY JUNCTION BRANCH MIGRATION COMPLEX SUBUNIT RUVB"/>
    <property type="match status" value="1"/>
</dbReference>
<dbReference type="Pfam" id="PF17864">
    <property type="entry name" value="AAA_lid_4"/>
    <property type="match status" value="1"/>
</dbReference>
<dbReference type="Pfam" id="PF05491">
    <property type="entry name" value="RuvB_C"/>
    <property type="match status" value="1"/>
</dbReference>
<dbReference type="Pfam" id="PF05496">
    <property type="entry name" value="RuvB_N"/>
    <property type="match status" value="1"/>
</dbReference>
<dbReference type="SMART" id="SM00382">
    <property type="entry name" value="AAA"/>
    <property type="match status" value="1"/>
</dbReference>
<dbReference type="SUPFAM" id="SSF52540">
    <property type="entry name" value="P-loop containing nucleoside triphosphate hydrolases"/>
    <property type="match status" value="1"/>
</dbReference>
<dbReference type="SUPFAM" id="SSF46785">
    <property type="entry name" value="Winged helix' DNA-binding domain"/>
    <property type="match status" value="1"/>
</dbReference>